<name>SUI1_THEVO</name>
<organism>
    <name type="scientific">Thermoplasma volcanium (strain ATCC 51530 / DSM 4299 / JCM 9571 / NBRC 15438 / GSS1)</name>
    <dbReference type="NCBI Taxonomy" id="273116"/>
    <lineage>
        <taxon>Archaea</taxon>
        <taxon>Methanobacteriati</taxon>
        <taxon>Thermoplasmatota</taxon>
        <taxon>Thermoplasmata</taxon>
        <taxon>Thermoplasmatales</taxon>
        <taxon>Thermoplasmataceae</taxon>
        <taxon>Thermoplasma</taxon>
    </lineage>
</organism>
<evidence type="ECO:0000255" key="1">
    <source>
        <dbReference type="HAMAP-Rule" id="MF_00604"/>
    </source>
</evidence>
<sequence length="100" mass="11447">MKDKNFTGMPKELQPWEGFGREAQAVKIVVDKRRYGKFVTIIEGIDPKIEDIEKIAKELKKKVASGGTVKEGRIIELQGDHRQEVKKFLEDMGFKVSVEQ</sequence>
<protein>
    <recommendedName>
        <fullName evidence="1">Protein translation factor SUI1 homolog</fullName>
    </recommendedName>
</protein>
<keyword id="KW-0648">Protein biosynthesis</keyword>
<keyword id="KW-0810">Translation regulation</keyword>
<gene>
    <name type="ordered locus">TV0336</name>
    <name type="ORF">TVG0336952</name>
</gene>
<accession>Q97BW9</accession>
<proteinExistence type="inferred from homology"/>
<dbReference type="EMBL" id="BA000011">
    <property type="protein sequence ID" value="BAB59478.1"/>
    <property type="molecule type" value="Genomic_DNA"/>
</dbReference>
<dbReference type="RefSeq" id="WP_010916590.1">
    <property type="nucleotide sequence ID" value="NC_002689.2"/>
</dbReference>
<dbReference type="SMR" id="Q97BW9"/>
<dbReference type="STRING" id="273116.gene:9381113"/>
<dbReference type="PaxDb" id="273116-14324551"/>
<dbReference type="GeneID" id="1440848"/>
<dbReference type="KEGG" id="tvo:TVG0336952"/>
<dbReference type="eggNOG" id="arCOG04223">
    <property type="taxonomic scope" value="Archaea"/>
</dbReference>
<dbReference type="HOGENOM" id="CLU_082805_6_1_2"/>
<dbReference type="OrthoDB" id="11182at2157"/>
<dbReference type="PhylomeDB" id="Q97BW9"/>
<dbReference type="Proteomes" id="UP000001017">
    <property type="component" value="Chromosome"/>
</dbReference>
<dbReference type="GO" id="GO:0003729">
    <property type="term" value="F:mRNA binding"/>
    <property type="evidence" value="ECO:0007669"/>
    <property type="project" value="TreeGrafter"/>
</dbReference>
<dbReference type="GO" id="GO:0003743">
    <property type="term" value="F:translation initiation factor activity"/>
    <property type="evidence" value="ECO:0007669"/>
    <property type="project" value="InterPro"/>
</dbReference>
<dbReference type="GO" id="GO:0001731">
    <property type="term" value="P:formation of translation preinitiation complex"/>
    <property type="evidence" value="ECO:0007669"/>
    <property type="project" value="TreeGrafter"/>
</dbReference>
<dbReference type="GO" id="GO:0006417">
    <property type="term" value="P:regulation of translation"/>
    <property type="evidence" value="ECO:0007669"/>
    <property type="project" value="UniProtKB-UniRule"/>
</dbReference>
<dbReference type="GO" id="GO:0002188">
    <property type="term" value="P:translation reinitiation"/>
    <property type="evidence" value="ECO:0007669"/>
    <property type="project" value="TreeGrafter"/>
</dbReference>
<dbReference type="CDD" id="cd11567">
    <property type="entry name" value="YciH_like"/>
    <property type="match status" value="1"/>
</dbReference>
<dbReference type="Gene3D" id="3.30.780.10">
    <property type="entry name" value="SUI1-like domain"/>
    <property type="match status" value="1"/>
</dbReference>
<dbReference type="HAMAP" id="MF_00604">
    <property type="entry name" value="SUI1"/>
    <property type="match status" value="1"/>
</dbReference>
<dbReference type="InterPro" id="IPR050318">
    <property type="entry name" value="DENR/SUI1_TIF"/>
</dbReference>
<dbReference type="InterPro" id="IPR001950">
    <property type="entry name" value="SUI1"/>
</dbReference>
<dbReference type="InterPro" id="IPR022851">
    <property type="entry name" value="SUI1_arc"/>
</dbReference>
<dbReference type="InterPro" id="IPR005872">
    <property type="entry name" value="SUI1_arc_bac"/>
</dbReference>
<dbReference type="InterPro" id="IPR036877">
    <property type="entry name" value="SUI1_dom_sf"/>
</dbReference>
<dbReference type="NCBIfam" id="NF002096">
    <property type="entry name" value="PRK00939.1"/>
    <property type="match status" value="1"/>
</dbReference>
<dbReference type="PANTHER" id="PTHR12789:SF0">
    <property type="entry name" value="DENSITY-REGULATED PROTEIN"/>
    <property type="match status" value="1"/>
</dbReference>
<dbReference type="PANTHER" id="PTHR12789">
    <property type="entry name" value="DENSITY-REGULATED PROTEIN HOMOLOG"/>
    <property type="match status" value="1"/>
</dbReference>
<dbReference type="Pfam" id="PF01253">
    <property type="entry name" value="SUI1"/>
    <property type="match status" value="1"/>
</dbReference>
<dbReference type="SUPFAM" id="SSF55159">
    <property type="entry name" value="eIF1-like"/>
    <property type="match status" value="1"/>
</dbReference>
<dbReference type="PROSITE" id="PS50296">
    <property type="entry name" value="SUI1"/>
    <property type="match status" value="1"/>
</dbReference>
<reference key="1">
    <citation type="journal article" date="2000" name="Proc. Natl. Acad. Sci. U.S.A.">
        <title>Archaeal adaptation to higher temperatures revealed by genomic sequence of Thermoplasma volcanium.</title>
        <authorList>
            <person name="Kawashima T."/>
            <person name="Amano N."/>
            <person name="Koike H."/>
            <person name="Makino S."/>
            <person name="Higuchi S."/>
            <person name="Kawashima-Ohya Y."/>
            <person name="Watanabe K."/>
            <person name="Yamazaki M."/>
            <person name="Kanehori K."/>
            <person name="Kawamoto T."/>
            <person name="Nunoshiba T."/>
            <person name="Yamamoto Y."/>
            <person name="Aramaki H."/>
            <person name="Makino K."/>
            <person name="Suzuki M."/>
        </authorList>
    </citation>
    <scope>NUCLEOTIDE SEQUENCE [LARGE SCALE GENOMIC DNA]</scope>
    <source>
        <strain>ATCC 51530 / DSM 4299 / JCM 9571 / NBRC 15438 / GSS1</strain>
    </source>
</reference>
<feature type="chain" id="PRO_0000130594" description="Protein translation factor SUI1 homolog">
    <location>
        <begin position="1"/>
        <end position="100"/>
    </location>
</feature>
<comment type="similarity">
    <text evidence="1">Belongs to the SUI1 family.</text>
</comment>